<name>Y081_OSHVF</name>
<organismHost>
    <name type="scientific">Magallana gigas</name>
    <name type="common">Pacific oyster</name>
    <name type="synonym">Crassostrea gigas</name>
    <dbReference type="NCBI Taxonomy" id="29159"/>
</organismHost>
<organismHost>
    <name type="scientific">Pecten maximus</name>
    <name type="common">King scallop</name>
    <name type="synonym">Pilgrim's clam</name>
    <dbReference type="NCBI Taxonomy" id="6579"/>
</organismHost>
<gene>
    <name type="ORF">ORF81</name>
</gene>
<feature type="chain" id="PRO_0000385102" description="Uncharacterized protein ORF81">
    <location>
        <begin position="1"/>
        <end position="213"/>
    </location>
</feature>
<accession>Q6R7E8</accession>
<protein>
    <recommendedName>
        <fullName>Uncharacterized protein ORF81</fullName>
    </recommendedName>
</protein>
<keyword id="KW-1185">Reference proteome</keyword>
<sequence length="213" mass="24610">MAQYTAPEFEELHIHMLCYRLHCDNKDNCELCKAGWEIIRKGTGHMIRDLLSKRDRRLAGSNIIGISLGEMDVFSARKIQEDNTDYNKTAGLINEIETSFPGMNFIKHVGGDLFKRCSQYTPFLKHADELYSTLKTVYNYFIRPTDNVPLDVIFNHITLCCHFSYILVTNPNSIWLLHTIHLTTDNILLINKHSGRNGEWIKWNVCAENSSRS</sequence>
<organism>
    <name type="scientific">Ostreid herpesvirus 1 (isolate France)</name>
    <name type="common">OsHV-1</name>
    <name type="synonym">Pacific oyster herpesvirus</name>
    <dbReference type="NCBI Taxonomy" id="654903"/>
    <lineage>
        <taxon>Viruses</taxon>
        <taxon>Duplodnaviria</taxon>
        <taxon>Heunggongvirae</taxon>
        <taxon>Peploviricota</taxon>
        <taxon>Herviviricetes</taxon>
        <taxon>Herpesvirales</taxon>
        <taxon>Malacoherpesviridae</taxon>
        <taxon>Ostreavirus</taxon>
        <taxon>Ostreavirus ostreidmalaco1</taxon>
        <taxon>Ostreid herpesvirus 1</taxon>
    </lineage>
</organism>
<dbReference type="EMBL" id="AY509253">
    <property type="protein sequence ID" value="AAS00967.1"/>
    <property type="molecule type" value="Genomic_DNA"/>
</dbReference>
<dbReference type="RefSeq" id="YP_024620.1">
    <property type="nucleotide sequence ID" value="NC_005881.2"/>
</dbReference>
<dbReference type="KEGG" id="vg:2948224"/>
<dbReference type="Proteomes" id="UP000007021">
    <property type="component" value="Segment"/>
</dbReference>
<reference key="1">
    <citation type="journal article" date="2005" name="J. Gen. Virol.">
        <title>A novel class of herpesvirus with bivalve hosts.</title>
        <authorList>
            <person name="Davison A.J."/>
            <person name="Trus B.L."/>
            <person name="Cheng N."/>
            <person name="Steven A.C."/>
            <person name="Watson M.S."/>
            <person name="Cunningham C."/>
            <person name="Le Deuff R.M."/>
            <person name="Renault T."/>
        </authorList>
    </citation>
    <scope>NUCLEOTIDE SEQUENCE [LARGE SCALE GENOMIC DNA]</scope>
</reference>
<proteinExistence type="predicted"/>